<name>CPXS_PYRYE</name>
<proteinExistence type="inferred from homology"/>
<feature type="chain" id="PRO_0000277369" description="Chromophore lyase CpcS/CpeS homolog">
    <location>
        <begin position="1"/>
        <end position="149"/>
    </location>
</feature>
<organism>
    <name type="scientific">Pyropia yezoensis</name>
    <name type="common">Susabi-nori</name>
    <name type="synonym">Porphyra yezoensis</name>
    <dbReference type="NCBI Taxonomy" id="2788"/>
    <lineage>
        <taxon>Eukaryota</taxon>
        <taxon>Rhodophyta</taxon>
        <taxon>Bangiophyceae</taxon>
        <taxon>Bangiales</taxon>
        <taxon>Bangiaceae</taxon>
        <taxon>Pyropia</taxon>
    </lineage>
</organism>
<geneLocation type="chloroplast"/>
<keyword id="KW-0150">Chloroplast</keyword>
<keyword id="KW-0456">Lyase</keyword>
<keyword id="KW-0934">Plastid</keyword>
<comment type="function">
    <text evidence="1">Might function to covalently attach a chromophore to Cys residue(s) of phycobiliproteins.</text>
</comment>
<comment type="subcellular location">
    <subcellularLocation>
        <location>Plastid</location>
        <location>Chloroplast</location>
    </subcellularLocation>
</comment>
<comment type="similarity">
    <text evidence="1">Belongs to the CpcS/CpeS biliprotein lyase family.</text>
</comment>
<sequence>MKNLISFFDRSKGKWISQRTTYELSNKNMSSVQSQMTMKIGNSLSGSIILASLNWGDIYRQVAHYAKNHSRSEYDNKFNLQFGNQLNNHKLLTLCIVTDPSLISFKTRYGSTTIDETYWFATNNLRLSTSIVKRFNTCVAVSFCSEIKV</sequence>
<evidence type="ECO:0000255" key="1">
    <source>
        <dbReference type="HAMAP-Rule" id="MF_01459"/>
    </source>
</evidence>
<accession>Q1XDQ2</accession>
<reference key="1">
    <citation type="submission" date="2003-11" db="EMBL/GenBank/DDBJ databases">
        <title>Whole genome sequence of Porphyra yezoensis chloroplast.</title>
        <authorList>
            <person name="Kunimoto M."/>
            <person name="Morishima K."/>
            <person name="Yoshikawa M."/>
            <person name="Fukuda S."/>
            <person name="Kobayashi T."/>
            <person name="Kobayashi M."/>
            <person name="Okazaki T."/>
            <person name="Ohara I."/>
            <person name="Nakayama I."/>
        </authorList>
    </citation>
    <scope>NUCLEOTIDE SEQUENCE [LARGE SCALE GENOMIC DNA]</scope>
    <source>
        <strain>U-51</strain>
    </source>
</reference>
<gene>
    <name evidence="1" type="primary">cpcS</name>
    <name evidence="1" type="synonym">ycf58</name>
</gene>
<dbReference type="EC" id="4.-.-.-" evidence="1"/>
<dbReference type="EMBL" id="AP006715">
    <property type="protein sequence ID" value="BAE92359.1"/>
    <property type="molecule type" value="Genomic_DNA"/>
</dbReference>
<dbReference type="RefSeq" id="YP_536916.1">
    <property type="nucleotide sequence ID" value="NC_007932.1"/>
</dbReference>
<dbReference type="SMR" id="Q1XDQ2"/>
<dbReference type="GO" id="GO:0009507">
    <property type="term" value="C:chloroplast"/>
    <property type="evidence" value="ECO:0007669"/>
    <property type="project" value="UniProtKB-SubCell"/>
</dbReference>
<dbReference type="GO" id="GO:0016829">
    <property type="term" value="F:lyase activity"/>
    <property type="evidence" value="ECO:0007669"/>
    <property type="project" value="UniProtKB-KW"/>
</dbReference>
<dbReference type="CDD" id="cd16339">
    <property type="entry name" value="CpcS"/>
    <property type="match status" value="1"/>
</dbReference>
<dbReference type="Gene3D" id="2.40.128.20">
    <property type="match status" value="2"/>
</dbReference>
<dbReference type="HAMAP" id="MF_01459">
    <property type="entry name" value="Chrphore_lyase_CpxS"/>
    <property type="match status" value="1"/>
</dbReference>
<dbReference type="InterPro" id="IPR012674">
    <property type="entry name" value="Calycin"/>
</dbReference>
<dbReference type="InterPro" id="IPR018536">
    <property type="entry name" value="CpcS/CpeS"/>
</dbReference>
<dbReference type="Pfam" id="PF09367">
    <property type="entry name" value="CpeS"/>
    <property type="match status" value="2"/>
</dbReference>
<protein>
    <recommendedName>
        <fullName evidence="1">Chromophore lyase CpcS/CpeS homolog</fullName>
        <ecNumber evidence="1">4.-.-.-</ecNumber>
    </recommendedName>
</protein>